<feature type="chain" id="PRO_0000220978" description="Histone deacetylase complex subunit SAP18">
    <location>
        <begin position="1"/>
        <end position="150"/>
    </location>
</feature>
<feature type="sequence conflict" description="In Ref. 4; AAL48535." evidence="5" ref="4">
    <original>T</original>
    <variation>A</variation>
    <location>
        <position position="57"/>
    </location>
</feature>
<protein>
    <recommendedName>
        <fullName>Histone deacetylase complex subunit SAP18</fullName>
    </recommendedName>
    <alternativeName>
        <fullName>18 kDa Sin3-associated polypeptide</fullName>
    </alternativeName>
    <alternativeName>
        <fullName>Bicoid-interacting protein 1</fullName>
    </alternativeName>
    <alternativeName>
        <fullName>dSAP18</fullName>
    </alternativeName>
</protein>
<evidence type="ECO:0000250" key="1"/>
<evidence type="ECO:0000250" key="2">
    <source>
        <dbReference type="UniProtKB" id="O00422"/>
    </source>
</evidence>
<evidence type="ECO:0000269" key="3">
    <source>
    </source>
</evidence>
<evidence type="ECO:0000269" key="4">
    <source>
    </source>
</evidence>
<evidence type="ECO:0000305" key="5"/>
<name>SAP18_DROME</name>
<accession>Q9VEX9</accession>
<accession>Q1LYZ7</accession>
<accession>Q8SZF6</accession>
<accession>Q9N9Z3</accession>
<keyword id="KW-0963">Cytoplasm</keyword>
<keyword id="KW-0217">Developmental protein</keyword>
<keyword id="KW-0539">Nucleus</keyword>
<keyword id="KW-1185">Reference proteome</keyword>
<keyword id="KW-0678">Repressor</keyword>
<keyword id="KW-0804">Transcription</keyword>
<keyword id="KW-0805">Transcription regulation</keyword>
<gene>
    <name type="primary">Bin1</name>
    <name type="synonym">SAP18</name>
    <name type="ORF">CG6046</name>
</gene>
<sequence length="150" mass="17288">MANVESMIVEEKTQVKQIDREKTCPMLLRVFCSTGRHHSVSEYMFGNVPTNELQIYTWQDATLHELTSLVRDVNPDTRKKGTYFDFAVVYPNFRSNHFQMREIGVTCTGQKGIDDNKTLAQAKFSIGDFLDISITPPNRLPPTARRQRPY</sequence>
<reference key="1">
    <citation type="journal article" date="2001" name="Dev. Genes Evol.">
        <title>Drosophila SAP18, a member of the Sin3/Rpd3 histone deacetylase complex, interacts with Bicoid and inhibits its activity.</title>
        <authorList>
            <person name="Zhu W."/>
            <person name="Foehr M."/>
            <person name="Jaynes J.B."/>
            <person name="Hanes S.D."/>
        </authorList>
    </citation>
    <scope>NUCLEOTIDE SEQUENCE [MRNA]</scope>
    <scope>FUNCTION</scope>
    <scope>SUBCELLULAR LOCATION</scope>
    <scope>INTERACTION WITH BCD</scope>
    <scope>DEVELOPMENTAL STAGE</scope>
</reference>
<reference key="2">
    <citation type="journal article" date="2000" name="Science">
        <title>The genome sequence of Drosophila melanogaster.</title>
        <authorList>
            <person name="Adams M.D."/>
            <person name="Celniker S.E."/>
            <person name="Holt R.A."/>
            <person name="Evans C.A."/>
            <person name="Gocayne J.D."/>
            <person name="Amanatides P.G."/>
            <person name="Scherer S.E."/>
            <person name="Li P.W."/>
            <person name="Hoskins R.A."/>
            <person name="Galle R.F."/>
            <person name="George R.A."/>
            <person name="Lewis S.E."/>
            <person name="Richards S."/>
            <person name="Ashburner M."/>
            <person name="Henderson S.N."/>
            <person name="Sutton G.G."/>
            <person name="Wortman J.R."/>
            <person name="Yandell M.D."/>
            <person name="Zhang Q."/>
            <person name="Chen L.X."/>
            <person name="Brandon R.C."/>
            <person name="Rogers Y.-H.C."/>
            <person name="Blazej R.G."/>
            <person name="Champe M."/>
            <person name="Pfeiffer B.D."/>
            <person name="Wan K.H."/>
            <person name="Doyle C."/>
            <person name="Baxter E.G."/>
            <person name="Helt G."/>
            <person name="Nelson C.R."/>
            <person name="Miklos G.L.G."/>
            <person name="Abril J.F."/>
            <person name="Agbayani A."/>
            <person name="An H.-J."/>
            <person name="Andrews-Pfannkoch C."/>
            <person name="Baldwin D."/>
            <person name="Ballew R.M."/>
            <person name="Basu A."/>
            <person name="Baxendale J."/>
            <person name="Bayraktaroglu L."/>
            <person name="Beasley E.M."/>
            <person name="Beeson K.Y."/>
            <person name="Benos P.V."/>
            <person name="Berman B.P."/>
            <person name="Bhandari D."/>
            <person name="Bolshakov S."/>
            <person name="Borkova D."/>
            <person name="Botchan M.R."/>
            <person name="Bouck J."/>
            <person name="Brokstein P."/>
            <person name="Brottier P."/>
            <person name="Burtis K.C."/>
            <person name="Busam D.A."/>
            <person name="Butler H."/>
            <person name="Cadieu E."/>
            <person name="Center A."/>
            <person name="Chandra I."/>
            <person name="Cherry J.M."/>
            <person name="Cawley S."/>
            <person name="Dahlke C."/>
            <person name="Davenport L.B."/>
            <person name="Davies P."/>
            <person name="de Pablos B."/>
            <person name="Delcher A."/>
            <person name="Deng Z."/>
            <person name="Mays A.D."/>
            <person name="Dew I."/>
            <person name="Dietz S.M."/>
            <person name="Dodson K."/>
            <person name="Doup L.E."/>
            <person name="Downes M."/>
            <person name="Dugan-Rocha S."/>
            <person name="Dunkov B.C."/>
            <person name="Dunn P."/>
            <person name="Durbin K.J."/>
            <person name="Evangelista C.C."/>
            <person name="Ferraz C."/>
            <person name="Ferriera S."/>
            <person name="Fleischmann W."/>
            <person name="Fosler C."/>
            <person name="Gabrielian A.E."/>
            <person name="Garg N.S."/>
            <person name="Gelbart W.M."/>
            <person name="Glasser K."/>
            <person name="Glodek A."/>
            <person name="Gong F."/>
            <person name="Gorrell J.H."/>
            <person name="Gu Z."/>
            <person name="Guan P."/>
            <person name="Harris M."/>
            <person name="Harris N.L."/>
            <person name="Harvey D.A."/>
            <person name="Heiman T.J."/>
            <person name="Hernandez J.R."/>
            <person name="Houck J."/>
            <person name="Hostin D."/>
            <person name="Houston K.A."/>
            <person name="Howland T.J."/>
            <person name="Wei M.-H."/>
            <person name="Ibegwam C."/>
            <person name="Jalali M."/>
            <person name="Kalush F."/>
            <person name="Karpen G.H."/>
            <person name="Ke Z."/>
            <person name="Kennison J.A."/>
            <person name="Ketchum K.A."/>
            <person name="Kimmel B.E."/>
            <person name="Kodira C.D."/>
            <person name="Kraft C.L."/>
            <person name="Kravitz S."/>
            <person name="Kulp D."/>
            <person name="Lai Z."/>
            <person name="Lasko P."/>
            <person name="Lei Y."/>
            <person name="Levitsky A.A."/>
            <person name="Li J.H."/>
            <person name="Li Z."/>
            <person name="Liang Y."/>
            <person name="Lin X."/>
            <person name="Liu X."/>
            <person name="Mattei B."/>
            <person name="McIntosh T.C."/>
            <person name="McLeod M.P."/>
            <person name="McPherson D."/>
            <person name="Merkulov G."/>
            <person name="Milshina N.V."/>
            <person name="Mobarry C."/>
            <person name="Morris J."/>
            <person name="Moshrefi A."/>
            <person name="Mount S.M."/>
            <person name="Moy M."/>
            <person name="Murphy B."/>
            <person name="Murphy L."/>
            <person name="Muzny D.M."/>
            <person name="Nelson D.L."/>
            <person name="Nelson D.R."/>
            <person name="Nelson K.A."/>
            <person name="Nixon K."/>
            <person name="Nusskern D.R."/>
            <person name="Pacleb J.M."/>
            <person name="Palazzolo M."/>
            <person name="Pittman G.S."/>
            <person name="Pan S."/>
            <person name="Pollard J."/>
            <person name="Puri V."/>
            <person name="Reese M.G."/>
            <person name="Reinert K."/>
            <person name="Remington K."/>
            <person name="Saunders R.D.C."/>
            <person name="Scheeler F."/>
            <person name="Shen H."/>
            <person name="Shue B.C."/>
            <person name="Siden-Kiamos I."/>
            <person name="Simpson M."/>
            <person name="Skupski M.P."/>
            <person name="Smith T.J."/>
            <person name="Spier E."/>
            <person name="Spradling A.C."/>
            <person name="Stapleton M."/>
            <person name="Strong R."/>
            <person name="Sun E."/>
            <person name="Svirskas R."/>
            <person name="Tector C."/>
            <person name="Turner R."/>
            <person name="Venter E."/>
            <person name="Wang A.H."/>
            <person name="Wang X."/>
            <person name="Wang Z.-Y."/>
            <person name="Wassarman D.A."/>
            <person name="Weinstock G.M."/>
            <person name="Weissenbach J."/>
            <person name="Williams S.M."/>
            <person name="Woodage T."/>
            <person name="Worley K.C."/>
            <person name="Wu D."/>
            <person name="Yang S."/>
            <person name="Yao Q.A."/>
            <person name="Ye J."/>
            <person name="Yeh R.-F."/>
            <person name="Zaveri J.S."/>
            <person name="Zhan M."/>
            <person name="Zhang G."/>
            <person name="Zhao Q."/>
            <person name="Zheng L."/>
            <person name="Zheng X.H."/>
            <person name="Zhong F.N."/>
            <person name="Zhong W."/>
            <person name="Zhou X."/>
            <person name="Zhu S.C."/>
            <person name="Zhu X."/>
            <person name="Smith H.O."/>
            <person name="Gibbs R.A."/>
            <person name="Myers E.W."/>
            <person name="Rubin G.M."/>
            <person name="Venter J.C."/>
        </authorList>
    </citation>
    <scope>NUCLEOTIDE SEQUENCE [LARGE SCALE GENOMIC DNA]</scope>
    <source>
        <strain>Berkeley</strain>
    </source>
</reference>
<reference key="3">
    <citation type="journal article" date="2002" name="Genome Biol.">
        <title>Annotation of the Drosophila melanogaster euchromatic genome: a systematic review.</title>
        <authorList>
            <person name="Misra S."/>
            <person name="Crosby M.A."/>
            <person name="Mungall C.J."/>
            <person name="Matthews B.B."/>
            <person name="Campbell K.S."/>
            <person name="Hradecky P."/>
            <person name="Huang Y."/>
            <person name="Kaminker J.S."/>
            <person name="Millburn G.H."/>
            <person name="Prochnik S.E."/>
            <person name="Smith C.D."/>
            <person name="Tupy J.L."/>
            <person name="Whitfield E.J."/>
            <person name="Bayraktaroglu L."/>
            <person name="Berman B.P."/>
            <person name="Bettencourt B.R."/>
            <person name="Celniker S.E."/>
            <person name="de Grey A.D.N.J."/>
            <person name="Drysdale R.A."/>
            <person name="Harris N.L."/>
            <person name="Richter J."/>
            <person name="Russo S."/>
            <person name="Schroeder A.J."/>
            <person name="Shu S.Q."/>
            <person name="Stapleton M."/>
            <person name="Yamada C."/>
            <person name="Ashburner M."/>
            <person name="Gelbart W.M."/>
            <person name="Rubin G.M."/>
            <person name="Lewis S.E."/>
        </authorList>
    </citation>
    <scope>GENOME REANNOTATION</scope>
    <source>
        <strain>Berkeley</strain>
    </source>
</reference>
<reference key="4">
    <citation type="journal article" date="2002" name="Genome Biol.">
        <title>A Drosophila full-length cDNA resource.</title>
        <authorList>
            <person name="Stapleton M."/>
            <person name="Carlson J.W."/>
            <person name="Brokstein P."/>
            <person name="Yu C."/>
            <person name="Champe M."/>
            <person name="George R.A."/>
            <person name="Guarin H."/>
            <person name="Kronmiller B."/>
            <person name="Pacleb J.M."/>
            <person name="Park S."/>
            <person name="Wan K.H."/>
            <person name="Rubin G.M."/>
            <person name="Celniker S.E."/>
        </authorList>
    </citation>
    <scope>NUCLEOTIDE SEQUENCE [LARGE SCALE MRNA]</scope>
    <source>
        <strain>Berkeley</strain>
        <tissue>Embryo</tissue>
    </source>
</reference>
<reference key="5">
    <citation type="submission" date="2006-10" db="EMBL/GenBank/DDBJ databases">
        <authorList>
            <person name="Stapleton M."/>
            <person name="Carlson J.W."/>
            <person name="Frise E."/>
            <person name="Kapadia B."/>
            <person name="Park S."/>
            <person name="Wan K.H."/>
            <person name="Yu C."/>
            <person name="Celniker S.E."/>
        </authorList>
    </citation>
    <scope>NUCLEOTIDE SEQUENCE [LARGE SCALE MRNA]</scope>
    <source>
        <strain>Berkeley</strain>
    </source>
</reference>
<reference key="6">
    <citation type="journal article" date="2000" name="EMBO Rep.">
        <title>The GAGA factor of Drosophila interacts with SAP18, a Sin3-associated polypeptide.</title>
        <authorList>
            <person name="Espinas M.L."/>
            <person name="Canudas S."/>
            <person name="Fanti L."/>
            <person name="Pimpinelli S."/>
            <person name="Casanova J."/>
            <person name="Azorin F."/>
        </authorList>
    </citation>
    <scope>NUCLEOTIDE SEQUENCE [MRNA] OF 11-150</scope>
    <scope>FUNCTION</scope>
    <scope>SUBCELLULAR LOCATION</scope>
    <scope>INTERACTION WITH TRL</scope>
</reference>
<dbReference type="EMBL" id="AF297546">
    <property type="protein sequence ID" value="AAG34996.1"/>
    <property type="molecule type" value="mRNA"/>
</dbReference>
<dbReference type="EMBL" id="AE014297">
    <property type="protein sequence ID" value="AAF55284.1"/>
    <property type="molecule type" value="Genomic_DNA"/>
</dbReference>
<dbReference type="EMBL" id="AY070913">
    <property type="protein sequence ID" value="AAL48535.1"/>
    <property type="molecule type" value="mRNA"/>
</dbReference>
<dbReference type="EMBL" id="BT025229">
    <property type="protein sequence ID" value="ABF17920.1"/>
    <property type="molecule type" value="mRNA"/>
</dbReference>
<dbReference type="EMBL" id="AJ278500">
    <property type="protein sequence ID" value="CAB95728.1"/>
    <property type="molecule type" value="mRNA"/>
</dbReference>
<dbReference type="RefSeq" id="NP_001303440.1">
    <property type="nucleotide sequence ID" value="NM_001316511.1"/>
</dbReference>
<dbReference type="RefSeq" id="NP_001303441.1">
    <property type="nucleotide sequence ID" value="NM_001316512.1"/>
</dbReference>
<dbReference type="RefSeq" id="NP_524377.1">
    <property type="nucleotide sequence ID" value="NM_079653.3"/>
</dbReference>
<dbReference type="SMR" id="Q9VEX9"/>
<dbReference type="BioGRID" id="67016">
    <property type="interactions" value="28"/>
</dbReference>
<dbReference type="DIP" id="DIP-19160N"/>
<dbReference type="FunCoup" id="Q9VEX9">
    <property type="interactions" value="2518"/>
</dbReference>
<dbReference type="IntAct" id="Q9VEX9">
    <property type="interactions" value="15"/>
</dbReference>
<dbReference type="MINT" id="Q9VEX9"/>
<dbReference type="STRING" id="7227.FBpp0312505"/>
<dbReference type="PaxDb" id="7227-FBpp0082731"/>
<dbReference type="DNASU" id="41965"/>
<dbReference type="EnsemblMetazoa" id="FBtr0083279">
    <property type="protein sequence ID" value="FBpp0082731"/>
    <property type="gene ID" value="FBgn0024491"/>
</dbReference>
<dbReference type="EnsemblMetazoa" id="FBtr0347200">
    <property type="protein sequence ID" value="FBpp0312505"/>
    <property type="gene ID" value="FBgn0024491"/>
</dbReference>
<dbReference type="EnsemblMetazoa" id="FBtr0347201">
    <property type="protein sequence ID" value="FBpp0312506"/>
    <property type="gene ID" value="FBgn0024491"/>
</dbReference>
<dbReference type="GeneID" id="41965"/>
<dbReference type="KEGG" id="dme:Dmel_CG6046"/>
<dbReference type="AGR" id="FB:FBgn0024491"/>
<dbReference type="CTD" id="274"/>
<dbReference type="FlyBase" id="FBgn0024491">
    <property type="gene designation" value="Bin1"/>
</dbReference>
<dbReference type="VEuPathDB" id="VectorBase:FBgn0024491"/>
<dbReference type="eggNOG" id="KOG3391">
    <property type="taxonomic scope" value="Eukaryota"/>
</dbReference>
<dbReference type="GeneTree" id="ENSGT00390000003152"/>
<dbReference type="HOGENOM" id="CLU_108681_0_1_1"/>
<dbReference type="InParanoid" id="Q9VEX9"/>
<dbReference type="OMA" id="TYRMREI"/>
<dbReference type="OrthoDB" id="440566at2759"/>
<dbReference type="PhylomeDB" id="Q9VEX9"/>
<dbReference type="Reactome" id="R-DME-3214815">
    <property type="pathway name" value="HDACs deacetylate histones"/>
</dbReference>
<dbReference type="Reactome" id="R-DME-72163">
    <property type="pathway name" value="mRNA Splicing - Major Pathway"/>
</dbReference>
<dbReference type="SignaLink" id="Q9VEX9"/>
<dbReference type="BioGRID-ORCS" id="41965">
    <property type="hits" value="0 hits in 1 CRISPR screen"/>
</dbReference>
<dbReference type="GenomeRNAi" id="41965"/>
<dbReference type="PRO" id="PR:Q9VEX9"/>
<dbReference type="Proteomes" id="UP000000803">
    <property type="component" value="Chromosome 3R"/>
</dbReference>
<dbReference type="Bgee" id="FBgn0024491">
    <property type="expression patterns" value="Expressed in hemocyte (sensu Nematoda and Protostomia) in arthropod fat body and 219 other cell types or tissues"/>
</dbReference>
<dbReference type="ExpressionAtlas" id="Q9VEX9">
    <property type="expression patterns" value="baseline and differential"/>
</dbReference>
<dbReference type="GO" id="GO:0005737">
    <property type="term" value="C:cytoplasm"/>
    <property type="evidence" value="ECO:0007669"/>
    <property type="project" value="UniProtKB-SubCell"/>
</dbReference>
<dbReference type="GO" id="GO:0005634">
    <property type="term" value="C:nucleus"/>
    <property type="evidence" value="ECO:0000318"/>
    <property type="project" value="GO_Central"/>
</dbReference>
<dbReference type="GO" id="GO:0140297">
    <property type="term" value="F:DNA-binding transcription factor binding"/>
    <property type="evidence" value="ECO:0000353"/>
    <property type="project" value="FlyBase"/>
</dbReference>
<dbReference type="GO" id="GO:0003714">
    <property type="term" value="F:transcription corepressor activity"/>
    <property type="evidence" value="ECO:0000316"/>
    <property type="project" value="FlyBase"/>
</dbReference>
<dbReference type="GO" id="GO:0031507">
    <property type="term" value="P:heterochromatin formation"/>
    <property type="evidence" value="ECO:0000316"/>
    <property type="project" value="FlyBase"/>
</dbReference>
<dbReference type="GO" id="GO:0045892">
    <property type="term" value="P:negative regulation of DNA-templated transcription"/>
    <property type="evidence" value="ECO:0000314"/>
    <property type="project" value="FlyBase"/>
</dbReference>
<dbReference type="FunFam" id="3.10.20.550:FF:000001">
    <property type="entry name" value="Histone deacetylase complex subunit SAP18"/>
    <property type="match status" value="1"/>
</dbReference>
<dbReference type="Gene3D" id="3.10.20.550">
    <property type="entry name" value="ASAP complex, SAP18 subunit"/>
    <property type="match status" value="1"/>
</dbReference>
<dbReference type="InterPro" id="IPR017250">
    <property type="entry name" value="Hist_deAcase_cplx_SAP18"/>
</dbReference>
<dbReference type="InterPro" id="IPR010516">
    <property type="entry name" value="SAP18"/>
</dbReference>
<dbReference type="InterPro" id="IPR042534">
    <property type="entry name" value="SAP18_sf"/>
</dbReference>
<dbReference type="PANTHER" id="PTHR13082:SF0">
    <property type="entry name" value="HISTONE DEACETYLASE COMPLEX SUBUNIT SAP18"/>
    <property type="match status" value="1"/>
</dbReference>
<dbReference type="PANTHER" id="PTHR13082">
    <property type="entry name" value="SAP18"/>
    <property type="match status" value="1"/>
</dbReference>
<dbReference type="Pfam" id="PF06487">
    <property type="entry name" value="SAP18"/>
    <property type="match status" value="1"/>
</dbReference>
<dbReference type="PIRSF" id="PIRSF037637">
    <property type="entry name" value="HDAC_SAP18"/>
    <property type="match status" value="1"/>
</dbReference>
<comment type="function">
    <text evidence="3 4">Involved in the tethering of the SIN3 complex to core histone proteins. Interacts with bicoid (bcd) to repress transcription of bicoid target genes in the anterior tip of the embryo; a process known as retraction. Interacts with Trl and binds to Polycomb response elements at the bithorax complex. May contribute to the regulation of other homeotic gene expressions.</text>
</comment>
<comment type="subunit">
    <text evidence="1 3 4">Forms a complex with SIN3 and histone deacetylase (By similarity). Interacts with the N-terminal residues of TRL. Interacts with BCD; in vitro and yeast cells.</text>
</comment>
<comment type="interaction">
    <interactant intactId="EBI-129424">
        <id>Q9VEX9</id>
    </interactant>
    <interactant intactId="EBI-196628">
        <id>P09081</id>
        <label>bcd</label>
    </interactant>
    <organismsDiffer>false</organismsDiffer>
    <experiments>2</experiments>
</comment>
<comment type="interaction">
    <interactant intactId="EBI-129424">
        <id>Q9VEX9</id>
    </interactant>
    <interactant intactId="EBI-112315">
        <id>P42124</id>
        <label>E(z)</label>
    </interactant>
    <organismsDiffer>false</organismsDiffer>
    <experiments>7</experiments>
</comment>
<comment type="interaction">
    <interactant intactId="EBI-129424">
        <id>Q9VEX9</id>
    </interactant>
    <interactant intactId="EBI-665803">
        <id>Q08605-2</id>
        <label>Trl</label>
    </interactant>
    <organismsDiffer>false</organismsDiffer>
    <experiments>4</experiments>
</comment>
<comment type="interaction">
    <interactant intactId="EBI-129424">
        <id>Q9VEX9</id>
    </interactant>
    <interactant intactId="EBI-81752">
        <id>P60953</id>
        <label>CDC42</label>
    </interactant>
    <organismsDiffer>true</organismsDiffer>
    <experiments>2</experiments>
</comment>
<comment type="interaction">
    <interactant intactId="EBI-129424">
        <id>Q9VEX9</id>
    </interactant>
    <interactant intactId="EBI-13892">
        <id>P07274</id>
        <label>PFY1</label>
    </interactant>
    <organismsDiffer>true</organismsDiffer>
    <experiments>3</experiments>
</comment>
<comment type="subcellular location">
    <subcellularLocation>
        <location evidence="3 4">Nucleus</location>
    </subcellularLocation>
    <subcellularLocation>
        <location evidence="2">Cytoplasm</location>
    </subcellularLocation>
    <text evidence="2">Shuttles between the nucleus and the cytoplasm.</text>
</comment>
<comment type="developmental stage">
    <text evidence="4">Expressed both maternally and zygotically.</text>
</comment>
<comment type="similarity">
    <text evidence="5">Belongs to the SAP18 family.</text>
</comment>
<organism>
    <name type="scientific">Drosophila melanogaster</name>
    <name type="common">Fruit fly</name>
    <dbReference type="NCBI Taxonomy" id="7227"/>
    <lineage>
        <taxon>Eukaryota</taxon>
        <taxon>Metazoa</taxon>
        <taxon>Ecdysozoa</taxon>
        <taxon>Arthropoda</taxon>
        <taxon>Hexapoda</taxon>
        <taxon>Insecta</taxon>
        <taxon>Pterygota</taxon>
        <taxon>Neoptera</taxon>
        <taxon>Endopterygota</taxon>
        <taxon>Diptera</taxon>
        <taxon>Brachycera</taxon>
        <taxon>Muscomorpha</taxon>
        <taxon>Ephydroidea</taxon>
        <taxon>Drosophilidae</taxon>
        <taxon>Drosophila</taxon>
        <taxon>Sophophora</taxon>
    </lineage>
</organism>
<proteinExistence type="evidence at protein level"/>